<feature type="peptide" id="PRO_0000043763" description="Caeridin-4">
    <location>
        <begin position="1"/>
        <end position="15"/>
    </location>
</feature>
<feature type="modified residue" description="Leucine amide" evidence="1">
    <location>
        <position position="15"/>
    </location>
</feature>
<accession>P82076</accession>
<organism>
    <name type="scientific">Ranoidea caerulea</name>
    <name type="common">Green tree frog</name>
    <name type="synonym">Litoria caerulea</name>
    <dbReference type="NCBI Taxonomy" id="30344"/>
    <lineage>
        <taxon>Eukaryota</taxon>
        <taxon>Metazoa</taxon>
        <taxon>Chordata</taxon>
        <taxon>Craniata</taxon>
        <taxon>Vertebrata</taxon>
        <taxon>Euteleostomi</taxon>
        <taxon>Amphibia</taxon>
        <taxon>Batrachia</taxon>
        <taxon>Anura</taxon>
        <taxon>Neobatrachia</taxon>
        <taxon>Hyloidea</taxon>
        <taxon>Hylidae</taxon>
        <taxon>Pelodryadinae</taxon>
        <taxon>Ranoidea</taxon>
    </lineage>
</organism>
<keyword id="KW-0027">Amidation</keyword>
<keyword id="KW-0878">Amphibian defense peptide</keyword>
<keyword id="KW-0903">Direct protein sequencing</keyword>
<keyword id="KW-0964">Secreted</keyword>
<protein>
    <recommendedName>
        <fullName>Caeridin-4</fullName>
    </recommendedName>
</protein>
<sequence>GLLDVVGNVLHSLGL</sequence>
<evidence type="ECO:0000269" key="1">
    <source ref="1"/>
</evidence>
<dbReference type="GO" id="GO:0005576">
    <property type="term" value="C:extracellular region"/>
    <property type="evidence" value="ECO:0007669"/>
    <property type="project" value="UniProtKB-SubCell"/>
</dbReference>
<dbReference type="GO" id="GO:0006952">
    <property type="term" value="P:defense response"/>
    <property type="evidence" value="ECO:0007669"/>
    <property type="project" value="UniProtKB-KW"/>
</dbReference>
<reference key="1">
    <citation type="journal article" date="1993" name="J. Chem. Soc. Perkin Trans. I">
        <title>Peptides from Australian frogs. Structures of the caeridins from Litoria caerulea.</title>
        <authorList>
            <person name="Waugh R.J."/>
            <person name="Stone D.J.M."/>
            <person name="Bowie J.H."/>
            <person name="Wallace J.C."/>
            <person name="Tyler M.J."/>
        </authorList>
    </citation>
    <scope>PROTEIN SEQUENCE</scope>
    <scope>AMIDATION AT LEU-15</scope>
    <scope>MASS SPECTROMETRY</scope>
    <source>
        <tissue>Parotoid gland</tissue>
    </source>
</reference>
<comment type="function">
    <text>Caeridins show neither neuropeptide activity nor antibiotic activity.</text>
</comment>
<comment type="subcellular location">
    <subcellularLocation>
        <location>Secreted</location>
    </subcellularLocation>
</comment>
<comment type="tissue specificity">
    <text>Expressed by the skin parotoid and/or rostral glands.</text>
</comment>
<comment type="mass spectrometry"/>
<proteinExistence type="evidence at protein level"/>
<name>CDN4_RANCA</name>